<name>IL10_RAT</name>
<keyword id="KW-0202">Cytokine</keyword>
<keyword id="KW-1015">Disulfide bond</keyword>
<keyword id="KW-0325">Glycoprotein</keyword>
<keyword id="KW-1185">Reference proteome</keyword>
<keyword id="KW-0964">Secreted</keyword>
<keyword id="KW-0732">Signal</keyword>
<sequence>MPGSALLCCLLLLAGVKTSKGHSIRGDNNCTHFPVSQTHMLRELRAAFSQVKTFFQKKDQLDNILLTDSLLQDFKGYLGCQALSEMIKFYLVEVMPQAENHGPEIKEHLNSLGEKLKTLWIQLRRCHRFLPCENKSKAVEQVKNDFNKLQDKGVYKAMNEFDIFINCIEAYVTLKMKN</sequence>
<comment type="function">
    <text evidence="2 3">Major immune regulatory cytokine that acts on many cells of the immune system where it has profound anti-inflammatory functions, limiting excessive tissue disruption caused by inflammation. Mechanistically, IL10 binds to its heterotetrameric receptor comprising IL10RA and IL10RB leading to JAK1 and STAT2-mediated phosphorylation of STAT3. In turn, STAT3 translocates to the nucleus where it drives expression of anti-inflammatory mediators. Targets antigen-presenting cells (APCs) such as macrophages and monocytes and inhibits their release of pro-inflammatory cytokines including granulocyte-macrophage colony-stimulating factor /GM-CSF, granulocyte colony-stimulating factor/G-CSF, IL-1 alpha, IL-1 beta, IL-6, IL-8 and TNF-alpha. Also interferes with antigen presentation by reducing the expression of MHC-class II and co-stimulatory molecules, thereby inhibiting their ability to induce T cell activation (By similarity). In addition, controls the inflammatory response of macrophages by reprogramming essential metabolic pathways including mTOR signaling (By similarity).</text>
</comment>
<comment type="subunit">
    <text evidence="3">Homodimer. Interacts with IL10RA and IL10RB.</text>
</comment>
<comment type="subcellular location">
    <subcellularLocation>
        <location evidence="3">Secreted</location>
    </subcellularLocation>
</comment>
<comment type="similarity">
    <text evidence="5">Belongs to the IL-10 family.</text>
</comment>
<protein>
    <recommendedName>
        <fullName>Interleukin-10</fullName>
        <shortName>IL-10</shortName>
    </recommendedName>
    <alternativeName>
        <fullName>Cytokine synthesis inhibitory factor</fullName>
        <shortName>CSIF</shortName>
    </alternativeName>
</protein>
<gene>
    <name type="primary">Il10</name>
    <name type="synonym">Il-10</name>
</gene>
<feature type="signal peptide" evidence="4">
    <location>
        <begin position="1"/>
        <end position="18"/>
    </location>
</feature>
<feature type="chain" id="PRO_0000015372" description="Interleukin-10">
    <location>
        <begin position="19"/>
        <end position="178"/>
    </location>
</feature>
<feature type="glycosylation site" description="N-linked (GlcNAc...) asparagine" evidence="4">
    <location>
        <position position="29"/>
    </location>
</feature>
<feature type="glycosylation site" description="N-linked (GlcNAc...) asparagine" evidence="4">
    <location>
        <position position="134"/>
    </location>
</feature>
<feature type="disulfide bond" evidence="1">
    <location>
        <begin position="30"/>
        <end position="126"/>
    </location>
</feature>
<feature type="disulfide bond" evidence="1">
    <location>
        <begin position="80"/>
        <end position="132"/>
    </location>
</feature>
<feature type="sequence conflict" description="In Ref. 2; CAA43090." evidence="5" ref="2">
    <original>P</original>
    <variation>L</variation>
    <location>
        <position position="2"/>
    </location>
</feature>
<feature type="sequence conflict" description="In Ref. 2; CAA43090." evidence="5" ref="2">
    <original>L</original>
    <variation>V</variation>
    <location>
        <position position="65"/>
    </location>
</feature>
<evidence type="ECO:0000250" key="1"/>
<evidence type="ECO:0000250" key="2">
    <source>
        <dbReference type="UniProtKB" id="P18893"/>
    </source>
</evidence>
<evidence type="ECO:0000250" key="3">
    <source>
        <dbReference type="UniProtKB" id="P22301"/>
    </source>
</evidence>
<evidence type="ECO:0000255" key="4"/>
<evidence type="ECO:0000305" key="5"/>
<accession>P29456</accession>
<accession>Q63263</accession>
<proteinExistence type="evidence at transcript level"/>
<dbReference type="EMBL" id="L02926">
    <property type="protein sequence ID" value="AAA41425.1"/>
    <property type="molecule type" value="mRNA"/>
</dbReference>
<dbReference type="EMBL" id="X60675">
    <property type="protein sequence ID" value="CAA43090.1"/>
    <property type="molecule type" value="mRNA"/>
</dbReference>
<dbReference type="PIR" id="JN0475">
    <property type="entry name" value="JN0475"/>
</dbReference>
<dbReference type="RefSeq" id="NP_036986.2">
    <property type="nucleotide sequence ID" value="NM_012854.2"/>
</dbReference>
<dbReference type="SMR" id="P29456"/>
<dbReference type="FunCoup" id="P29456">
    <property type="interactions" value="166"/>
</dbReference>
<dbReference type="STRING" id="10116.ENSRNOP00000006246"/>
<dbReference type="GlyCosmos" id="P29456">
    <property type="glycosylation" value="2 sites, No reported glycans"/>
</dbReference>
<dbReference type="GlyGen" id="P29456">
    <property type="glycosylation" value="2 sites"/>
</dbReference>
<dbReference type="PaxDb" id="10116-ENSRNOP00000006246"/>
<dbReference type="Ensembl" id="ENSRNOT00000006246.6">
    <property type="protein sequence ID" value="ENSRNOP00000006246.2"/>
    <property type="gene ID" value="ENSRNOG00000004647.6"/>
</dbReference>
<dbReference type="GeneID" id="25325"/>
<dbReference type="KEGG" id="rno:25325"/>
<dbReference type="UCSC" id="RGD:2886">
    <property type="organism name" value="rat"/>
</dbReference>
<dbReference type="AGR" id="RGD:2886"/>
<dbReference type="CTD" id="3586"/>
<dbReference type="RGD" id="2886">
    <property type="gene designation" value="Il10"/>
</dbReference>
<dbReference type="eggNOG" id="ENOG502S22U">
    <property type="taxonomic scope" value="Eukaryota"/>
</dbReference>
<dbReference type="GeneTree" id="ENSGT00950000183124"/>
<dbReference type="HOGENOM" id="CLU_127747_0_0_1"/>
<dbReference type="InParanoid" id="P29456"/>
<dbReference type="OMA" id="CHRFFTC"/>
<dbReference type="OrthoDB" id="9931894at2759"/>
<dbReference type="PhylomeDB" id="P29456"/>
<dbReference type="TreeFam" id="TF333253"/>
<dbReference type="Reactome" id="R-RNO-6783783">
    <property type="pathway name" value="Interleukin-10 signaling"/>
</dbReference>
<dbReference type="PRO" id="PR:P29456"/>
<dbReference type="Proteomes" id="UP000002494">
    <property type="component" value="Chromosome 13"/>
</dbReference>
<dbReference type="Bgee" id="ENSRNOG00000004647">
    <property type="expression patterns" value="Expressed in ileum and 6 other cell types or tissues"/>
</dbReference>
<dbReference type="GO" id="GO:0005615">
    <property type="term" value="C:extracellular space"/>
    <property type="evidence" value="ECO:0000314"/>
    <property type="project" value="RGD"/>
</dbReference>
<dbReference type="GO" id="GO:0005125">
    <property type="term" value="F:cytokine activity"/>
    <property type="evidence" value="ECO:0000266"/>
    <property type="project" value="RGD"/>
</dbReference>
<dbReference type="GO" id="GO:0005141">
    <property type="term" value="F:interleukin-10 receptor binding"/>
    <property type="evidence" value="ECO:0000314"/>
    <property type="project" value="RGD"/>
</dbReference>
<dbReference type="GO" id="GO:0046983">
    <property type="term" value="F:protein dimerization activity"/>
    <property type="evidence" value="ECO:0000266"/>
    <property type="project" value="RGD"/>
</dbReference>
<dbReference type="GO" id="GO:0060670">
    <property type="term" value="P:branching involved in labyrinthine layer morphogenesis"/>
    <property type="evidence" value="ECO:0000266"/>
    <property type="project" value="RGD"/>
</dbReference>
<dbReference type="GO" id="GO:0071392">
    <property type="term" value="P:cellular response to estradiol stimulus"/>
    <property type="evidence" value="ECO:0000270"/>
    <property type="project" value="RGD"/>
</dbReference>
<dbReference type="GO" id="GO:0035729">
    <property type="term" value="P:cellular response to hepatocyte growth factor stimulus"/>
    <property type="evidence" value="ECO:0000266"/>
    <property type="project" value="RGD"/>
</dbReference>
<dbReference type="GO" id="GO:0071222">
    <property type="term" value="P:cellular response to lipopolysaccharide"/>
    <property type="evidence" value="ECO:0000266"/>
    <property type="project" value="RGD"/>
</dbReference>
<dbReference type="GO" id="GO:0002439">
    <property type="term" value="P:chronic inflammatory response to antigenic stimulus"/>
    <property type="evidence" value="ECO:0000266"/>
    <property type="project" value="RGD"/>
</dbReference>
<dbReference type="GO" id="GO:0042742">
    <property type="term" value="P:defense response to bacterium"/>
    <property type="evidence" value="ECO:0000266"/>
    <property type="project" value="RGD"/>
</dbReference>
<dbReference type="GO" id="GO:0042832">
    <property type="term" value="P:defense response to protozoan"/>
    <property type="evidence" value="ECO:0000266"/>
    <property type="project" value="RGD"/>
</dbReference>
<dbReference type="GO" id="GO:0006955">
    <property type="term" value="P:immune response"/>
    <property type="evidence" value="ECO:0000315"/>
    <property type="project" value="RGD"/>
</dbReference>
<dbReference type="GO" id="GO:0140105">
    <property type="term" value="P:interleukin-10-mediated signaling pathway"/>
    <property type="evidence" value="ECO:0000266"/>
    <property type="project" value="RGD"/>
</dbReference>
<dbReference type="GO" id="GO:0097421">
    <property type="term" value="P:liver regeneration"/>
    <property type="evidence" value="ECO:0000270"/>
    <property type="project" value="RGD"/>
</dbReference>
<dbReference type="GO" id="GO:0043066">
    <property type="term" value="P:negative regulation of apoptotic process"/>
    <property type="evidence" value="ECO:0000315"/>
    <property type="project" value="RGD"/>
</dbReference>
<dbReference type="GO" id="GO:0010507">
    <property type="term" value="P:negative regulation of autophagy"/>
    <property type="evidence" value="ECO:0000266"/>
    <property type="project" value="RGD"/>
</dbReference>
<dbReference type="GO" id="GO:0030889">
    <property type="term" value="P:negative regulation of B cell proliferation"/>
    <property type="evidence" value="ECO:0000250"/>
    <property type="project" value="UniProtKB"/>
</dbReference>
<dbReference type="GO" id="GO:0008285">
    <property type="term" value="P:negative regulation of cell population proliferation"/>
    <property type="evidence" value="ECO:0000266"/>
    <property type="project" value="RGD"/>
</dbReference>
<dbReference type="GO" id="GO:0002875">
    <property type="term" value="P:negative regulation of chronic inflammatory response to antigenic stimulus"/>
    <property type="evidence" value="ECO:0000266"/>
    <property type="project" value="RGD"/>
</dbReference>
<dbReference type="GO" id="GO:0001818">
    <property type="term" value="P:negative regulation of cytokine production"/>
    <property type="evidence" value="ECO:0000315"/>
    <property type="project" value="RGD"/>
</dbReference>
<dbReference type="GO" id="GO:0002719">
    <property type="term" value="P:negative regulation of cytokine production involved in immune response"/>
    <property type="evidence" value="ECO:0000250"/>
    <property type="project" value="UniProtKB"/>
</dbReference>
<dbReference type="GO" id="GO:2000352">
    <property type="term" value="P:negative regulation of endothelial cell apoptotic process"/>
    <property type="evidence" value="ECO:0000266"/>
    <property type="project" value="RGD"/>
</dbReference>
<dbReference type="GO" id="GO:0034115">
    <property type="term" value="P:negative regulation of heterotypic cell-cell adhesion"/>
    <property type="evidence" value="ECO:0000266"/>
    <property type="project" value="RGD"/>
</dbReference>
<dbReference type="GO" id="GO:0050728">
    <property type="term" value="P:negative regulation of inflammatory response"/>
    <property type="evidence" value="ECO:0000250"/>
    <property type="project" value="UniProtKB"/>
</dbReference>
<dbReference type="GO" id="GO:0032695">
    <property type="term" value="P:negative regulation of interleukin-12 production"/>
    <property type="evidence" value="ECO:0000266"/>
    <property type="project" value="RGD"/>
</dbReference>
<dbReference type="GO" id="GO:0032715">
    <property type="term" value="P:negative regulation of interleukin-6 production"/>
    <property type="evidence" value="ECO:0000250"/>
    <property type="project" value="UniProtKB"/>
</dbReference>
<dbReference type="GO" id="GO:0051045">
    <property type="term" value="P:negative regulation of membrane protein ectodomain proteolysis"/>
    <property type="evidence" value="ECO:0000250"/>
    <property type="project" value="UniProtKB"/>
</dbReference>
<dbReference type="GO" id="GO:0045347">
    <property type="term" value="P:negative regulation of MHC class II biosynthetic process"/>
    <property type="evidence" value="ECO:0000266"/>
    <property type="project" value="RGD"/>
</dbReference>
<dbReference type="GO" id="GO:0030886">
    <property type="term" value="P:negative regulation of myeloid dendritic cell activation"/>
    <property type="evidence" value="ECO:0000266"/>
    <property type="project" value="RGD"/>
</dbReference>
<dbReference type="GO" id="GO:0043524">
    <property type="term" value="P:negative regulation of neuron apoptotic process"/>
    <property type="evidence" value="ECO:0000314"/>
    <property type="project" value="RGD"/>
</dbReference>
<dbReference type="GO" id="GO:0045019">
    <property type="term" value="P:negative regulation of nitric oxide biosynthetic process"/>
    <property type="evidence" value="ECO:0000314"/>
    <property type="project" value="RGD"/>
</dbReference>
<dbReference type="GO" id="GO:1903377">
    <property type="term" value="P:negative regulation of oxidative stress-induced neuron intrinsic apoptotic signaling pathway"/>
    <property type="evidence" value="ECO:0000266"/>
    <property type="project" value="RGD"/>
</dbReference>
<dbReference type="GO" id="GO:0032720">
    <property type="term" value="P:negative regulation of tumor necrosis factor production"/>
    <property type="evidence" value="ECO:0000314"/>
    <property type="project" value="RGD"/>
</dbReference>
<dbReference type="GO" id="GO:0032689">
    <property type="term" value="P:negative regulation of type II interferon production"/>
    <property type="evidence" value="ECO:0000266"/>
    <property type="project" value="RGD"/>
</dbReference>
<dbReference type="GO" id="GO:1904706">
    <property type="term" value="P:negative regulation of vascular associated smooth muscle cell proliferation"/>
    <property type="evidence" value="ECO:0000266"/>
    <property type="project" value="RGD"/>
</dbReference>
<dbReference type="GO" id="GO:0002904">
    <property type="term" value="P:positive regulation of B cell apoptotic process"/>
    <property type="evidence" value="ECO:0000250"/>
    <property type="project" value="UniProtKB"/>
</dbReference>
<dbReference type="GO" id="GO:0045787">
    <property type="term" value="P:positive regulation of cell cycle"/>
    <property type="evidence" value="ECO:0000266"/>
    <property type="project" value="RGD"/>
</dbReference>
<dbReference type="GO" id="GO:0001819">
    <property type="term" value="P:positive regulation of cytokine production"/>
    <property type="evidence" value="ECO:0000250"/>
    <property type="project" value="UniProtKB"/>
</dbReference>
<dbReference type="GO" id="GO:0051091">
    <property type="term" value="P:positive regulation of DNA-binding transcription factor activity"/>
    <property type="evidence" value="ECO:0000250"/>
    <property type="project" value="UniProtKB"/>
</dbReference>
<dbReference type="GO" id="GO:0045893">
    <property type="term" value="P:positive regulation of DNA-templated transcription"/>
    <property type="evidence" value="ECO:0000250"/>
    <property type="project" value="UniProtKB"/>
</dbReference>
<dbReference type="GO" id="GO:0001938">
    <property type="term" value="P:positive regulation of endothelial cell proliferation"/>
    <property type="evidence" value="ECO:0000266"/>
    <property type="project" value="RGD"/>
</dbReference>
<dbReference type="GO" id="GO:0002639">
    <property type="term" value="P:positive regulation of immunoglobulin production"/>
    <property type="evidence" value="ECO:0000266"/>
    <property type="project" value="RGD"/>
</dbReference>
<dbReference type="GO" id="GO:0043032">
    <property type="term" value="P:positive regulation of macrophage activation"/>
    <property type="evidence" value="ECO:0000314"/>
    <property type="project" value="RGD"/>
</dbReference>
<dbReference type="GO" id="GO:0045348">
    <property type="term" value="P:positive regulation of MHC class II biosynthetic process"/>
    <property type="evidence" value="ECO:0000266"/>
    <property type="project" value="RGD"/>
</dbReference>
<dbReference type="GO" id="GO:1902895">
    <property type="term" value="P:positive regulation of miRNA transcription"/>
    <property type="evidence" value="ECO:0000266"/>
    <property type="project" value="RGD"/>
</dbReference>
<dbReference type="GO" id="GO:1900100">
    <property type="term" value="P:positive regulation of plasma cell differentiation"/>
    <property type="evidence" value="ECO:0000266"/>
    <property type="project" value="RGD"/>
</dbReference>
<dbReference type="GO" id="GO:0046427">
    <property type="term" value="P:positive regulation of receptor signaling pathway via JAK-STAT"/>
    <property type="evidence" value="ECO:0000266"/>
    <property type="project" value="RGD"/>
</dbReference>
<dbReference type="GO" id="GO:1903672">
    <property type="term" value="P:positive regulation of sprouting angiogenesis"/>
    <property type="evidence" value="ECO:0000266"/>
    <property type="project" value="RGD"/>
</dbReference>
<dbReference type="GO" id="GO:0045944">
    <property type="term" value="P:positive regulation of transcription by RNA polymerase II"/>
    <property type="evidence" value="ECO:0000266"/>
    <property type="project" value="RGD"/>
</dbReference>
<dbReference type="GO" id="GO:0010468">
    <property type="term" value="P:regulation of gene expression"/>
    <property type="evidence" value="ECO:0000266"/>
    <property type="project" value="RGD"/>
</dbReference>
<dbReference type="GO" id="GO:1903034">
    <property type="term" value="P:regulation of response to wounding"/>
    <property type="evidence" value="ECO:0000266"/>
    <property type="project" value="RGD"/>
</dbReference>
<dbReference type="GO" id="GO:0050807">
    <property type="term" value="P:regulation of synapse organization"/>
    <property type="evidence" value="ECO:0000314"/>
    <property type="project" value="RGD"/>
</dbReference>
<dbReference type="GO" id="GO:0014823">
    <property type="term" value="P:response to activity"/>
    <property type="evidence" value="ECO:0000270"/>
    <property type="project" value="RGD"/>
</dbReference>
<dbReference type="GO" id="GO:0034465">
    <property type="term" value="P:response to carbon monoxide"/>
    <property type="evidence" value="ECO:0000270"/>
    <property type="project" value="RGD"/>
</dbReference>
<dbReference type="GO" id="GO:0051384">
    <property type="term" value="P:response to glucocorticoid"/>
    <property type="evidence" value="ECO:0000270"/>
    <property type="project" value="RGD"/>
</dbReference>
<dbReference type="GO" id="GO:0014854">
    <property type="term" value="P:response to inactivity"/>
    <property type="evidence" value="ECO:0000270"/>
    <property type="project" value="RGD"/>
</dbReference>
<dbReference type="GO" id="GO:0032868">
    <property type="term" value="P:response to insulin"/>
    <property type="evidence" value="ECO:0000270"/>
    <property type="project" value="RGD"/>
</dbReference>
<dbReference type="GO" id="GO:0032496">
    <property type="term" value="P:response to lipopolysaccharide"/>
    <property type="evidence" value="ECO:0000270"/>
    <property type="project" value="RGD"/>
</dbReference>
<dbReference type="GO" id="GO:0002237">
    <property type="term" value="P:response to molecule of bacterial origin"/>
    <property type="evidence" value="ECO:0000250"/>
    <property type="project" value="UniProtKB"/>
</dbReference>
<dbReference type="GO" id="GO:0009410">
    <property type="term" value="P:response to xenobiotic stimulus"/>
    <property type="evidence" value="ECO:0000270"/>
    <property type="project" value="RGD"/>
</dbReference>
<dbReference type="FunFam" id="1.20.1250.10:FF:000011">
    <property type="entry name" value="Interleukin-10"/>
    <property type="match status" value="1"/>
</dbReference>
<dbReference type="Gene3D" id="1.20.1250.10">
    <property type="match status" value="1"/>
</dbReference>
<dbReference type="InterPro" id="IPR009079">
    <property type="entry name" value="4_helix_cytokine-like_core"/>
</dbReference>
<dbReference type="InterPro" id="IPR000098">
    <property type="entry name" value="IL-10"/>
</dbReference>
<dbReference type="InterPro" id="IPR020443">
    <property type="entry name" value="IL-10/19/20/24/26"/>
</dbReference>
<dbReference type="InterPro" id="IPR020423">
    <property type="entry name" value="IL-10_CS"/>
</dbReference>
<dbReference type="PANTHER" id="PTHR48482:SF5">
    <property type="entry name" value="INTERLEUKIN-10"/>
    <property type="match status" value="1"/>
</dbReference>
<dbReference type="PANTHER" id="PTHR48482">
    <property type="entry name" value="INTERLEUKIN-19-RELATED"/>
    <property type="match status" value="1"/>
</dbReference>
<dbReference type="Pfam" id="PF00726">
    <property type="entry name" value="IL10"/>
    <property type="match status" value="1"/>
</dbReference>
<dbReference type="PRINTS" id="PR01294">
    <property type="entry name" value="INTRLEUKIN10"/>
</dbReference>
<dbReference type="SMART" id="SM00188">
    <property type="entry name" value="IL10"/>
    <property type="match status" value="1"/>
</dbReference>
<dbReference type="SUPFAM" id="SSF47266">
    <property type="entry name" value="4-helical cytokines"/>
    <property type="match status" value="1"/>
</dbReference>
<dbReference type="PROSITE" id="PS00520">
    <property type="entry name" value="INTERLEUKIN_10"/>
    <property type="match status" value="1"/>
</dbReference>
<reference key="1">
    <citation type="journal article" date="1992" name="Biochem. Biophys. Res. Commun.">
        <title>Synthesis and characterization of rat interleukin-10 (IL-10) cDNA clones from the RNA of cultured OX8-OX22-thoracic duct T cells.</title>
        <authorList>
            <person name="Goodman R.E."/>
            <person name="Oblak J."/>
            <person name="Bell R.G."/>
        </authorList>
    </citation>
    <scope>NUCLEOTIDE SEQUENCE [MRNA]</scope>
</reference>
<reference key="2">
    <citation type="journal article" date="1993" name="Biochem. Biophys. Res. Commun.">
        <title>Molecular cloning of rat cytokine synthesis inhibitory factor (IL-10) cDNA and expression in spleen and macrophages.</title>
        <authorList>
            <person name="Feng L."/>
            <person name="Tang W.W."/>
            <person name="Chang J.C.C."/>
            <person name="Wilson C.B."/>
        </authorList>
    </citation>
    <scope>NUCLEOTIDE SEQUENCE [MRNA]</scope>
    <source>
        <strain>Fischer 344</strain>
        <tissue>Macrophage</tissue>
    </source>
</reference>
<organism>
    <name type="scientific">Rattus norvegicus</name>
    <name type="common">Rat</name>
    <dbReference type="NCBI Taxonomy" id="10116"/>
    <lineage>
        <taxon>Eukaryota</taxon>
        <taxon>Metazoa</taxon>
        <taxon>Chordata</taxon>
        <taxon>Craniata</taxon>
        <taxon>Vertebrata</taxon>
        <taxon>Euteleostomi</taxon>
        <taxon>Mammalia</taxon>
        <taxon>Eutheria</taxon>
        <taxon>Euarchontoglires</taxon>
        <taxon>Glires</taxon>
        <taxon>Rodentia</taxon>
        <taxon>Myomorpha</taxon>
        <taxon>Muroidea</taxon>
        <taxon>Muridae</taxon>
        <taxon>Murinae</taxon>
        <taxon>Rattus</taxon>
    </lineage>
</organism>